<comment type="function">
    <text evidence="1">mRNA-binding protein involved in proper cytoplasmic distribution of mitochondria.</text>
</comment>
<comment type="subunit">
    <text evidence="1">May associate with the eukaryotic translation initiation factor 3 (eIF-3) complex.</text>
</comment>
<comment type="subcellular location">
    <subcellularLocation>
        <location evidence="1">Cytoplasm</location>
    </subcellularLocation>
</comment>
<comment type="similarity">
    <text evidence="1">Belongs to the CLU family.</text>
</comment>
<name>CLU_COCIM</name>
<feature type="chain" id="PRO_0000366402" description="Clustered mitochondria protein homolog">
    <location>
        <begin position="1"/>
        <end position="1282"/>
    </location>
</feature>
<feature type="domain" description="Clu" evidence="2">
    <location>
        <begin position="341"/>
        <end position="585"/>
    </location>
</feature>
<feature type="repeat" description="TPR">
    <location>
        <begin position="1003"/>
        <end position="1036"/>
    </location>
</feature>
<feature type="region of interest" description="Disordered" evidence="3">
    <location>
        <begin position="1"/>
        <end position="43"/>
    </location>
</feature>
<feature type="region of interest" description="Disordered" evidence="3">
    <location>
        <begin position="631"/>
        <end position="669"/>
    </location>
</feature>
<feature type="region of interest" description="Disordered" evidence="3">
    <location>
        <begin position="892"/>
        <end position="936"/>
    </location>
</feature>
<feature type="region of interest" description="Disordered" evidence="3">
    <location>
        <begin position="1202"/>
        <end position="1282"/>
    </location>
</feature>
<feature type="compositionally biased region" description="Basic and acidic residues" evidence="3">
    <location>
        <begin position="631"/>
        <end position="641"/>
    </location>
</feature>
<feature type="compositionally biased region" description="Basic and acidic residues" evidence="3">
    <location>
        <begin position="653"/>
        <end position="669"/>
    </location>
</feature>
<feature type="compositionally biased region" description="Low complexity" evidence="3">
    <location>
        <begin position="924"/>
        <end position="936"/>
    </location>
</feature>
<feature type="compositionally biased region" description="Polar residues" evidence="3">
    <location>
        <begin position="1212"/>
        <end position="1223"/>
    </location>
</feature>
<feature type="compositionally biased region" description="Basic residues" evidence="3">
    <location>
        <begin position="1257"/>
        <end position="1272"/>
    </location>
</feature>
<feature type="compositionally biased region" description="Polar residues" evidence="3">
    <location>
        <begin position="1273"/>
        <end position="1282"/>
    </location>
</feature>
<sequence length="1282" mass="143048">MEQNNGTTEHPKEVLDQTNPSNEVTGVPNGNHAEGEGDQNAGEAPGLFQITVKLPHEPYKIQVMVSNQEQVQDVRQSIVELPGTFQYTSFHLEHNGERINDYVELSEVKDLKPDAEIVLVEDPYTEKEARMHLVRIRELIGASGDRVDNLHGICAGLSLHDSVAAGEQLSDDIPSKEENSANGTAEHALVGYEVPGPADLRTILPRKQAPFPKTVKSISLSPWNPPPYHLRQKGHLLYLQVTTNEGEQYQITSHVSGFFVNKCSNSKFDPFPRAAPKNYSAHSLLTLISLISPSFENSFKALQEANNKKDLLTTFPFQNSIPHNPWLVPPTSSPATAHQSDITRPQENYLIAGVDNSETLRDWNEEFQTTRELPRDTVQDKVFRERLTSKLFADYNDAAARGAVLVARGEVAPLNPTEGRDAQIFVYNNIFFSFGADGVGTFASEGGDEAARVAVAKDVMGVKAVNQLDIAGLFTPGTMVIDYLGKRVVGQSIVPGIFKQREPGEHQIDYGGVDGKDVIAKHEAFVPVFEKLSKALRVKKHPVWDKDGARHELESSVETKGLLGTDGRKYVLDLYRITPLDVLWYEDSENHEPYPHRMSVLRLELVESYWRFKMGQYVKEEVEKRRKAKKEAEEKAEESKPNGEAADASENAESEKKETTSPDQERVDISDFKLALNPDVFSGQVPQTDEEKEEWAQDEKEVRDACNYLRSKVLPELIQDLHDGDVGFPMDGQSLSQLLHKRGINVRYLGKLAALAKEKGARLQALTALMTQDMVARAFKHIANRYLRNLPSAFATSCIAHLLNCLLGTEVNSKPRAEIDESLREIYPEGDFSFEQVTPTALKEDIEKQIKIRYRFSLDADWTSSLRHLQLLRDISLKLGLQLGAKNYAFDRSQLKNQDHSPAANGTRTPEEGGKKKKKKGSDQASPRPAQSPAPAVTFVPDDILNIVPIVKDASPRSALSEEALEAGRISLMQNQKELGQELILESLSLHEQIYGILHPEVAKLYHQLSMLYYQSDDKDAAVELARKAVIVTERTMGVDSADAILSYLNLSLFEHATGNTKVALVYIRHALELWKIIYGPNHPDSITTMNNAAVMLQHLKLYPDSRKWFEASLTVCEELFGRQSVNTATILFQLAQALALDQDSKAAVNRMRDAYNIFLNELGPEDRNTKEAESWLEQLTQNAVYIAKHAKDIQARRRRLANLPTRLGTKPQPQVGQTTSEMANAAEARGNASLDPRSIDELLKFIEGGESSAPRTKQKKRAAARNPKLRGSKQSTVKPSS</sequence>
<accession>Q1E101</accession>
<accession>J3KCE8</accession>
<organism>
    <name type="scientific">Coccidioides immitis (strain RS)</name>
    <name type="common">Valley fever fungus</name>
    <dbReference type="NCBI Taxonomy" id="246410"/>
    <lineage>
        <taxon>Eukaryota</taxon>
        <taxon>Fungi</taxon>
        <taxon>Dikarya</taxon>
        <taxon>Ascomycota</taxon>
        <taxon>Pezizomycotina</taxon>
        <taxon>Eurotiomycetes</taxon>
        <taxon>Eurotiomycetidae</taxon>
        <taxon>Onygenales</taxon>
        <taxon>Onygenaceae</taxon>
        <taxon>Coccidioides</taxon>
    </lineage>
</organism>
<keyword id="KW-0963">Cytoplasm</keyword>
<keyword id="KW-1185">Reference proteome</keyword>
<keyword id="KW-0677">Repeat</keyword>
<keyword id="KW-0802">TPR repeat</keyword>
<evidence type="ECO:0000255" key="1">
    <source>
        <dbReference type="HAMAP-Rule" id="MF_03013"/>
    </source>
</evidence>
<evidence type="ECO:0000255" key="2">
    <source>
        <dbReference type="PROSITE-ProRule" id="PRU01167"/>
    </source>
</evidence>
<evidence type="ECO:0000256" key="3">
    <source>
        <dbReference type="SAM" id="MobiDB-lite"/>
    </source>
</evidence>
<reference key="1">
    <citation type="journal article" date="2009" name="Genome Res.">
        <title>Comparative genomic analyses of the human fungal pathogens Coccidioides and their relatives.</title>
        <authorList>
            <person name="Sharpton T.J."/>
            <person name="Stajich J.E."/>
            <person name="Rounsley S.D."/>
            <person name="Gardner M.J."/>
            <person name="Wortman J.R."/>
            <person name="Jordar V.S."/>
            <person name="Maiti R."/>
            <person name="Kodira C.D."/>
            <person name="Neafsey D.E."/>
            <person name="Zeng Q."/>
            <person name="Hung C.-Y."/>
            <person name="McMahan C."/>
            <person name="Muszewska A."/>
            <person name="Grynberg M."/>
            <person name="Mandel M.A."/>
            <person name="Kellner E.M."/>
            <person name="Barker B.M."/>
            <person name="Galgiani J.N."/>
            <person name="Orbach M.J."/>
            <person name="Kirkland T.N."/>
            <person name="Cole G.T."/>
            <person name="Henn M.R."/>
            <person name="Birren B.W."/>
            <person name="Taylor J.W."/>
        </authorList>
    </citation>
    <scope>NUCLEOTIDE SEQUENCE [LARGE SCALE GENOMIC DNA]</scope>
    <source>
        <strain>RS</strain>
    </source>
</reference>
<reference key="2">
    <citation type="journal article" date="2010" name="Genome Res.">
        <title>Population genomic sequencing of Coccidioides fungi reveals recent hybridization and transposon control.</title>
        <authorList>
            <person name="Neafsey D.E."/>
            <person name="Barker B.M."/>
            <person name="Sharpton T.J."/>
            <person name="Stajich J.E."/>
            <person name="Park D.J."/>
            <person name="Whiston E."/>
            <person name="Hung C.-Y."/>
            <person name="McMahan C."/>
            <person name="White J."/>
            <person name="Sykes S."/>
            <person name="Heiman D."/>
            <person name="Young S."/>
            <person name="Zeng Q."/>
            <person name="Abouelleil A."/>
            <person name="Aftuck L."/>
            <person name="Bessette D."/>
            <person name="Brown A."/>
            <person name="FitzGerald M."/>
            <person name="Lui A."/>
            <person name="Macdonald J.P."/>
            <person name="Priest M."/>
            <person name="Orbach M.J."/>
            <person name="Galgiani J.N."/>
            <person name="Kirkland T.N."/>
            <person name="Cole G.T."/>
            <person name="Birren B.W."/>
            <person name="Henn M.R."/>
            <person name="Taylor J.W."/>
            <person name="Rounsley S.D."/>
        </authorList>
    </citation>
    <scope>GENOME REANNOTATION</scope>
    <source>
        <strain>RS</strain>
    </source>
</reference>
<proteinExistence type="inferred from homology"/>
<gene>
    <name evidence="1" type="primary">CLU1</name>
    <name evidence="1" type="synonym">TIF31</name>
    <name type="ORF">CIMG_03762</name>
</gene>
<dbReference type="EMBL" id="GG704916">
    <property type="protein sequence ID" value="EAS32738.3"/>
    <property type="molecule type" value="Genomic_DNA"/>
</dbReference>
<dbReference type="RefSeq" id="XP_001244321.1">
    <property type="nucleotide sequence ID" value="XM_001244320.2"/>
</dbReference>
<dbReference type="SMR" id="Q1E101"/>
<dbReference type="FunCoup" id="Q1E101">
    <property type="interactions" value="929"/>
</dbReference>
<dbReference type="STRING" id="246410.Q1E101"/>
<dbReference type="GeneID" id="4563128"/>
<dbReference type="KEGG" id="cim:CIMG_03762"/>
<dbReference type="VEuPathDB" id="FungiDB:CIMG_03762"/>
<dbReference type="InParanoid" id="Q1E101"/>
<dbReference type="OMA" id="HPVWDKD"/>
<dbReference type="OrthoDB" id="1414216at2759"/>
<dbReference type="Proteomes" id="UP000001261">
    <property type="component" value="Unassembled WGS sequence"/>
</dbReference>
<dbReference type="GO" id="GO:0005737">
    <property type="term" value="C:cytoplasm"/>
    <property type="evidence" value="ECO:0007669"/>
    <property type="project" value="UniProtKB-SubCell"/>
</dbReference>
<dbReference type="GO" id="GO:0003729">
    <property type="term" value="F:mRNA binding"/>
    <property type="evidence" value="ECO:0007669"/>
    <property type="project" value="TreeGrafter"/>
</dbReference>
<dbReference type="GO" id="GO:0048312">
    <property type="term" value="P:intracellular distribution of mitochondria"/>
    <property type="evidence" value="ECO:0007669"/>
    <property type="project" value="TreeGrafter"/>
</dbReference>
<dbReference type="GO" id="GO:0007005">
    <property type="term" value="P:mitochondrion organization"/>
    <property type="evidence" value="ECO:0007669"/>
    <property type="project" value="UniProtKB-UniRule"/>
</dbReference>
<dbReference type="CDD" id="cd15466">
    <property type="entry name" value="CLU-central"/>
    <property type="match status" value="1"/>
</dbReference>
<dbReference type="FunFam" id="1.25.40.10:FF:000293">
    <property type="entry name" value="Clustered mitochondria protein homolog"/>
    <property type="match status" value="1"/>
</dbReference>
<dbReference type="FunFam" id="1.25.40.10:FF:000532">
    <property type="entry name" value="Clustered mitochondria protein homolog"/>
    <property type="match status" value="1"/>
</dbReference>
<dbReference type="FunFam" id="3.30.2280.10:FF:000002">
    <property type="entry name" value="Clustered mitochondria protein homolog"/>
    <property type="match status" value="1"/>
</dbReference>
<dbReference type="Gene3D" id="3.30.2280.10">
    <property type="entry name" value="Hypothetical protein (hspc210)"/>
    <property type="match status" value="1"/>
</dbReference>
<dbReference type="Gene3D" id="1.25.40.10">
    <property type="entry name" value="Tetratricopeptide repeat domain"/>
    <property type="match status" value="2"/>
</dbReference>
<dbReference type="HAMAP" id="MF_03013">
    <property type="entry name" value="CLU"/>
    <property type="match status" value="1"/>
</dbReference>
<dbReference type="InterPro" id="IPR033646">
    <property type="entry name" value="CLU-central"/>
</dbReference>
<dbReference type="InterPro" id="IPR025697">
    <property type="entry name" value="CLU_dom"/>
</dbReference>
<dbReference type="InterPro" id="IPR028275">
    <property type="entry name" value="CLU_N"/>
</dbReference>
<dbReference type="InterPro" id="IPR027523">
    <property type="entry name" value="CLU_prot"/>
</dbReference>
<dbReference type="InterPro" id="IPR023231">
    <property type="entry name" value="GSKIP_dom_sf"/>
</dbReference>
<dbReference type="InterPro" id="IPR011990">
    <property type="entry name" value="TPR-like_helical_dom_sf"/>
</dbReference>
<dbReference type="InterPro" id="IPR019734">
    <property type="entry name" value="TPR_rpt"/>
</dbReference>
<dbReference type="PANTHER" id="PTHR12601:SF6">
    <property type="entry name" value="CLUSTERED MITOCHONDRIA PROTEIN HOMOLOG"/>
    <property type="match status" value="1"/>
</dbReference>
<dbReference type="PANTHER" id="PTHR12601">
    <property type="entry name" value="EUKARYOTIC TRANSLATION INITIATION FACTOR 3 SUBUNIT EIF-3"/>
    <property type="match status" value="1"/>
</dbReference>
<dbReference type="Pfam" id="PF13236">
    <property type="entry name" value="CLU"/>
    <property type="match status" value="1"/>
</dbReference>
<dbReference type="Pfam" id="PF15044">
    <property type="entry name" value="CLU_N"/>
    <property type="match status" value="1"/>
</dbReference>
<dbReference type="Pfam" id="PF12807">
    <property type="entry name" value="eIF3_p135"/>
    <property type="match status" value="1"/>
</dbReference>
<dbReference type="Pfam" id="PF13374">
    <property type="entry name" value="TPR_10"/>
    <property type="match status" value="2"/>
</dbReference>
<dbReference type="Pfam" id="PF13424">
    <property type="entry name" value="TPR_12"/>
    <property type="match status" value="1"/>
</dbReference>
<dbReference type="SUPFAM" id="SSF103107">
    <property type="entry name" value="Hypothetical protein c14orf129, hspc210"/>
    <property type="match status" value="1"/>
</dbReference>
<dbReference type="SUPFAM" id="SSF48452">
    <property type="entry name" value="TPR-like"/>
    <property type="match status" value="2"/>
</dbReference>
<dbReference type="PROSITE" id="PS51823">
    <property type="entry name" value="CLU"/>
    <property type="match status" value="1"/>
</dbReference>
<dbReference type="PROSITE" id="PS50005">
    <property type="entry name" value="TPR"/>
    <property type="match status" value="1"/>
</dbReference>
<protein>
    <recommendedName>
        <fullName evidence="1">Clustered mitochondria protein homolog</fullName>
    </recommendedName>
    <alternativeName>
        <fullName evidence="1">Protein TIF31 homolog</fullName>
    </alternativeName>
</protein>